<proteinExistence type="inferred from homology"/>
<feature type="chain" id="PRO_1000070586" description="Arginine exporter protein ArgO">
    <location>
        <begin position="1"/>
        <end position="205"/>
    </location>
</feature>
<feature type="transmembrane region" description="Helical" evidence="1">
    <location>
        <begin position="1"/>
        <end position="21"/>
    </location>
</feature>
<feature type="transmembrane region" description="Helical" evidence="1">
    <location>
        <begin position="42"/>
        <end position="62"/>
    </location>
</feature>
<feature type="transmembrane region" description="Helical" evidence="1">
    <location>
        <begin position="67"/>
        <end position="87"/>
    </location>
</feature>
<feature type="transmembrane region" description="Helical" evidence="1">
    <location>
        <begin position="111"/>
        <end position="131"/>
    </location>
</feature>
<feature type="transmembrane region" description="Helical" evidence="1">
    <location>
        <begin position="147"/>
        <end position="167"/>
    </location>
</feature>
<feature type="transmembrane region" description="Helical" evidence="1">
    <location>
        <begin position="185"/>
        <end position="205"/>
    </location>
</feature>
<dbReference type="EMBL" id="CP000668">
    <property type="protein sequence ID" value="ABP39005.1"/>
    <property type="molecule type" value="Genomic_DNA"/>
</dbReference>
<dbReference type="RefSeq" id="WP_002209960.1">
    <property type="nucleotide sequence ID" value="NZ_CP009715.1"/>
</dbReference>
<dbReference type="GeneID" id="57973722"/>
<dbReference type="KEGG" id="ypp:YPDSF_0595"/>
<dbReference type="PATRIC" id="fig|386656.14.peg.1914"/>
<dbReference type="GO" id="GO:0005886">
    <property type="term" value="C:plasma membrane"/>
    <property type="evidence" value="ECO:0007669"/>
    <property type="project" value="UniProtKB-SubCell"/>
</dbReference>
<dbReference type="GO" id="GO:0061459">
    <property type="term" value="F:L-arginine transmembrane transporter activity"/>
    <property type="evidence" value="ECO:0007669"/>
    <property type="project" value="UniProtKB-UniRule"/>
</dbReference>
<dbReference type="HAMAP" id="MF_01901">
    <property type="entry name" value="ArgO"/>
    <property type="match status" value="1"/>
</dbReference>
<dbReference type="InterPro" id="IPR023445">
    <property type="entry name" value="Arg_export_ArgO_enterobac"/>
</dbReference>
<dbReference type="InterPro" id="IPR001123">
    <property type="entry name" value="LeuE-type"/>
</dbReference>
<dbReference type="InterPro" id="IPR004777">
    <property type="entry name" value="Lys/arg_exporter"/>
</dbReference>
<dbReference type="NCBIfam" id="TIGR00948">
    <property type="entry name" value="2a75"/>
    <property type="match status" value="1"/>
</dbReference>
<dbReference type="NCBIfam" id="NF006801">
    <property type="entry name" value="PRK09304.1"/>
    <property type="match status" value="1"/>
</dbReference>
<dbReference type="PANTHER" id="PTHR30086">
    <property type="entry name" value="ARGININE EXPORTER PROTEIN ARGO"/>
    <property type="match status" value="1"/>
</dbReference>
<dbReference type="PANTHER" id="PTHR30086:SF20">
    <property type="entry name" value="ARGININE EXPORTER PROTEIN ARGO-RELATED"/>
    <property type="match status" value="1"/>
</dbReference>
<dbReference type="Pfam" id="PF01810">
    <property type="entry name" value="LysE"/>
    <property type="match status" value="1"/>
</dbReference>
<keyword id="KW-0029">Amino-acid transport</keyword>
<keyword id="KW-0997">Cell inner membrane</keyword>
<keyword id="KW-1003">Cell membrane</keyword>
<keyword id="KW-0472">Membrane</keyword>
<keyword id="KW-0812">Transmembrane</keyword>
<keyword id="KW-1133">Transmembrane helix</keyword>
<keyword id="KW-0813">Transport</keyword>
<organism>
    <name type="scientific">Yersinia pestis (strain Pestoides F)</name>
    <dbReference type="NCBI Taxonomy" id="386656"/>
    <lineage>
        <taxon>Bacteria</taxon>
        <taxon>Pseudomonadati</taxon>
        <taxon>Pseudomonadota</taxon>
        <taxon>Gammaproteobacteria</taxon>
        <taxon>Enterobacterales</taxon>
        <taxon>Yersiniaceae</taxon>
        <taxon>Yersinia</taxon>
    </lineage>
</organism>
<comment type="function">
    <text evidence="1">Involved in the export of arginine. Important to control the intracellular level of arginine and the correct balance between arginine and lysine.</text>
</comment>
<comment type="catalytic activity">
    <reaction evidence="1">
        <text>L-arginine(in) = L-arginine(out)</text>
        <dbReference type="Rhea" id="RHEA:32143"/>
        <dbReference type="ChEBI" id="CHEBI:32682"/>
    </reaction>
    <physiologicalReaction direction="left-to-right" evidence="1">
        <dbReference type="Rhea" id="RHEA:32144"/>
    </physiologicalReaction>
</comment>
<comment type="subcellular location">
    <subcellularLocation>
        <location evidence="1">Cell inner membrane</location>
        <topology evidence="1">Multi-pass membrane protein</topology>
    </subcellularLocation>
</comment>
<comment type="similarity">
    <text evidence="1">Belongs to the LysE/ArgO transporter (TC 2.A.75) family.</text>
</comment>
<reference key="1">
    <citation type="submission" date="2007-02" db="EMBL/GenBank/DDBJ databases">
        <title>Complete sequence of chromosome of Yersinia pestis Pestoides F.</title>
        <authorList>
            <consortium name="US DOE Joint Genome Institute"/>
            <person name="Copeland A."/>
            <person name="Lucas S."/>
            <person name="Lapidus A."/>
            <person name="Barry K."/>
            <person name="Detter J.C."/>
            <person name="Glavina del Rio T."/>
            <person name="Hammon N."/>
            <person name="Israni S."/>
            <person name="Dalin E."/>
            <person name="Tice H."/>
            <person name="Pitluck S."/>
            <person name="Di Bartolo G."/>
            <person name="Chain P."/>
            <person name="Malfatti S."/>
            <person name="Shin M."/>
            <person name="Vergez L."/>
            <person name="Schmutz J."/>
            <person name="Larimer F."/>
            <person name="Land M."/>
            <person name="Hauser L."/>
            <person name="Worsham P."/>
            <person name="Chu M."/>
            <person name="Bearden S."/>
            <person name="Garcia E."/>
            <person name="Richardson P."/>
        </authorList>
    </citation>
    <scope>NUCLEOTIDE SEQUENCE [LARGE SCALE GENOMIC DNA]</scope>
    <source>
        <strain>Pestoides F</strain>
    </source>
</reference>
<accession>A4TI93</accession>
<sequence>MLAVYLHGFILSAAMILPLGPQNVFVMNQGIKRQHHLMSASLCALSDIILICAGIFGGSALLSRSPLLLALVTWGGVAFLMWYGWGALMAAWRGDGVASSATSVTQGRWRILVTLLAVTWLNPHVYLDTFVVLGSLGGQLLPDIRPWFALGAVTASIVWFFALALLAAWLSPWLNRPVAQRIINLFVGGVMGFIAFQLARQGFGL</sequence>
<protein>
    <recommendedName>
        <fullName evidence="1">Arginine exporter protein ArgO</fullName>
    </recommendedName>
</protein>
<name>ARGO_YERPP</name>
<evidence type="ECO:0000255" key="1">
    <source>
        <dbReference type="HAMAP-Rule" id="MF_01901"/>
    </source>
</evidence>
<gene>
    <name evidence="1" type="primary">argO</name>
    <name type="ordered locus">YPDSF_0595</name>
</gene>